<gene>
    <name type="ordered locus">MT0102</name>
</gene>
<proteinExistence type="predicted"/>
<accession>P9WM68</accession>
<accession>L0T4A6</accession>
<accession>Q10890</accession>
<organism>
    <name type="scientific">Mycobacterium tuberculosis (strain CDC 1551 / Oshkosh)</name>
    <dbReference type="NCBI Taxonomy" id="83331"/>
    <lineage>
        <taxon>Bacteria</taxon>
        <taxon>Bacillati</taxon>
        <taxon>Actinomycetota</taxon>
        <taxon>Actinomycetes</taxon>
        <taxon>Mycobacteriales</taxon>
        <taxon>Mycobacteriaceae</taxon>
        <taxon>Mycobacterium</taxon>
        <taxon>Mycobacterium tuberculosis complex</taxon>
    </lineage>
</organism>
<protein>
    <recommendedName>
        <fullName>Uncharacterized protein MT0102</fullName>
    </recommendedName>
</protein>
<dbReference type="EMBL" id="AE000516">
    <property type="protein sequence ID" value="AAK44325.1"/>
    <property type="molecule type" value="Genomic_DNA"/>
</dbReference>
<dbReference type="PIR" id="E70750">
    <property type="entry name" value="E70750"/>
</dbReference>
<dbReference type="SMR" id="P9WM68"/>
<dbReference type="KEGG" id="mtc:MT0102"/>
<dbReference type="HOGENOM" id="CLU_081592_1_0_11"/>
<dbReference type="Proteomes" id="UP000001020">
    <property type="component" value="Chromosome"/>
</dbReference>
<dbReference type="GO" id="GO:0005886">
    <property type="term" value="C:plasma membrane"/>
    <property type="evidence" value="ECO:0007669"/>
    <property type="project" value="UniProtKB-SubCell"/>
</dbReference>
<dbReference type="InterPro" id="IPR027383">
    <property type="entry name" value="Znf_put"/>
</dbReference>
<dbReference type="Pfam" id="PF13490">
    <property type="entry name" value="zf-HC2"/>
    <property type="match status" value="1"/>
</dbReference>
<reference key="1">
    <citation type="journal article" date="2002" name="J. Bacteriol.">
        <title>Whole-genome comparison of Mycobacterium tuberculosis clinical and laboratory strains.</title>
        <authorList>
            <person name="Fleischmann R.D."/>
            <person name="Alland D."/>
            <person name="Eisen J.A."/>
            <person name="Carpenter L."/>
            <person name="White O."/>
            <person name="Peterson J.D."/>
            <person name="DeBoy R.T."/>
            <person name="Dodson R.J."/>
            <person name="Gwinn M.L."/>
            <person name="Haft D.H."/>
            <person name="Hickey E.K."/>
            <person name="Kolonay J.F."/>
            <person name="Nelson W.C."/>
            <person name="Umayam L.A."/>
            <person name="Ermolaeva M.D."/>
            <person name="Salzberg S.L."/>
            <person name="Delcher A."/>
            <person name="Utterback T.R."/>
            <person name="Weidman J.F."/>
            <person name="Khouri H.M."/>
            <person name="Gill J."/>
            <person name="Mikula A."/>
            <person name="Bishai W."/>
            <person name="Jacobs W.R. Jr."/>
            <person name="Venter J.C."/>
            <person name="Fraser C.M."/>
        </authorList>
    </citation>
    <scope>NUCLEOTIDE SEQUENCE [LARGE SCALE GENOMIC DNA]</scope>
    <source>
        <strain>CDC 1551 / Oshkosh</strain>
    </source>
</reference>
<feature type="chain" id="PRO_0000427356" description="Uncharacterized protein MT0102">
    <location>
        <begin position="1"/>
        <end position="282"/>
    </location>
</feature>
<feature type="transmembrane region" description="Helical" evidence="1">
    <location>
        <begin position="130"/>
        <end position="150"/>
    </location>
</feature>
<feature type="transmembrane region" description="Helical" evidence="1">
    <location>
        <begin position="170"/>
        <end position="190"/>
    </location>
</feature>
<feature type="transmembrane region" description="Helical" evidence="1">
    <location>
        <begin position="191"/>
        <end position="211"/>
    </location>
</feature>
<feature type="transmembrane region" description="Helical" evidence="1">
    <location>
        <begin position="223"/>
        <end position="243"/>
    </location>
</feature>
<feature type="region of interest" description="Disordered" evidence="2">
    <location>
        <begin position="263"/>
        <end position="282"/>
    </location>
</feature>
<sequence length="282" mass="29631">MLAQATTAGSFNHHASTVLQGCRGVPAAMWSEPAGAIRRHCATIDGMDCEVAREALSARLDGERAPVPSARVDEHLGECSACRAWFTQVASQAGDLRRLAESRPVVPPVGRLGIRRAPRRQHSPMTWRRWALLCVGIAQIALGTVQGFGLDVGLTHQHPTGAGTHLLNESTSWSIALGVIMVGAALWPSAAAGLAGVLTAFVAILTGYVIVDALSGAVSTTRILTHLPVVIGAVLAIMVWRSASGPRPRPDAVAAEPDIVLPDNASRGRRRGHLWPTDGSAA</sequence>
<name>Y093_MYCTO</name>
<evidence type="ECO:0000255" key="1"/>
<evidence type="ECO:0000256" key="2">
    <source>
        <dbReference type="SAM" id="MobiDB-lite"/>
    </source>
</evidence>
<evidence type="ECO:0000305" key="3"/>
<comment type="subcellular location">
    <subcellularLocation>
        <location evidence="3">Cell membrane</location>
        <topology evidence="3">Multi-pass membrane protein</topology>
    </subcellularLocation>
</comment>
<keyword id="KW-1003">Cell membrane</keyword>
<keyword id="KW-0472">Membrane</keyword>
<keyword id="KW-1185">Reference proteome</keyword>
<keyword id="KW-0812">Transmembrane</keyword>
<keyword id="KW-1133">Transmembrane helix</keyword>